<feature type="chain" id="PRO_0000442294" description="Disease resistance-like protein DSC2">
    <location>
        <begin position="1"/>
        <end position="1210"/>
    </location>
</feature>
<feature type="domain" description="TIR" evidence="2">
    <location>
        <begin position="59"/>
        <end position="223"/>
    </location>
</feature>
<feature type="domain" description="NB-ARC" evidence="1">
    <location>
        <begin position="241"/>
        <end position="511"/>
    </location>
</feature>
<feature type="repeat" description="LRR 1" evidence="1">
    <location>
        <begin position="662"/>
        <end position="685"/>
    </location>
</feature>
<feature type="repeat" description="LRR 2" evidence="1">
    <location>
        <begin position="686"/>
        <end position="709"/>
    </location>
</feature>
<feature type="repeat" description="LRR 3" evidence="1">
    <location>
        <begin position="711"/>
        <end position="732"/>
    </location>
</feature>
<feature type="repeat" description="LRR 4" evidence="1">
    <location>
        <begin position="756"/>
        <end position="780"/>
    </location>
</feature>
<feature type="repeat" description="LRR 5" evidence="1">
    <location>
        <begin position="783"/>
        <end position="804"/>
    </location>
</feature>
<feature type="repeat" description="LRR 6" evidence="1">
    <location>
        <begin position="805"/>
        <end position="828"/>
    </location>
</feature>
<feature type="repeat" description="LRR 7" evidence="1">
    <location>
        <begin position="830"/>
        <end position="848"/>
    </location>
</feature>
<feature type="repeat" description="LRR 8" evidence="1">
    <location>
        <begin position="849"/>
        <end position="873"/>
    </location>
</feature>
<feature type="repeat" description="LRR 9" evidence="1">
    <location>
        <begin position="940"/>
        <end position="970"/>
    </location>
</feature>
<feature type="active site" evidence="2">
    <location>
        <position position="134"/>
    </location>
</feature>
<feature type="mutagenesis site" description="Loss of function." evidence="3">
    <original>GK</original>
    <variation>AA</variation>
    <location>
        <begin position="267"/>
        <end position="268"/>
    </location>
</feature>
<proteinExistence type="evidence at protein level"/>
<organism>
    <name type="scientific">Arabidopsis thaliana</name>
    <name type="common">Mouse-ear cress</name>
    <dbReference type="NCBI Taxonomy" id="3702"/>
    <lineage>
        <taxon>Eukaryota</taxon>
        <taxon>Viridiplantae</taxon>
        <taxon>Streptophyta</taxon>
        <taxon>Embryophyta</taxon>
        <taxon>Tracheophyta</taxon>
        <taxon>Spermatophyta</taxon>
        <taxon>Magnoliopsida</taxon>
        <taxon>eudicotyledons</taxon>
        <taxon>Gunneridae</taxon>
        <taxon>Pentapetalae</taxon>
        <taxon>rosids</taxon>
        <taxon>malvids</taxon>
        <taxon>Brassicales</taxon>
        <taxon>Brassicaceae</taxon>
        <taxon>Camelineae</taxon>
        <taxon>Arabidopsis</taxon>
    </lineage>
</organism>
<sequence>MAIAEVIGFFTLVCVIWYWVYKKHKNLQLKICRSSIESSSSSSSLSSPPSLSSPISRTWTHQVFPSFRGEDVRKGFLSHIQKEFKSKGIVPFIDDEMKRGESIGPGLFQAIRESKIAIVLLSKNYASSSWCLNELVEIMNCREEIGQTVMTVFYQVDPSDVRKQTGDFGKAFKKTCVGKTQEVKQRWSRALMDVANILGQDSRKWDKEADMIVKVAKDVSDVLSYTPSRDFDDYVGIRPHITRINSLLCLESSDVRMIGILGPPGIGKTTIARVLYDQISEKFQFSAFIENIRLSYWKGWHDEGNLDFPVEIMTGDRQRKLNLQRRLLSELFNQKDIQVRHLGAVQERLRDHKVLVILDGVDQLEQLTALAKETQWFGYGSRIIITTQDQRLLRAHEINHVYKVDLPATDEALQIFCLYAFGQKFPYDGFKKLAREFTALAGELPLGLRVLGSYLRGMSLEEWKNALPRLRTSLDGEIEKTLRFAYNVLSDKDKSLFLHIACLFNGCQVNHVKQWLANSSLDVNHGFEVLSNKSLISTDMGLVRMHSLLQQLGVDIVRKQSIGEPEKRQFLVDVNEISDVITDNTGTGTILGIMLHVSKIEDVLVIEETVFDRMTNLQFLILDECLRDKLNLPLGLNCLPRKIRLLRWDYCPLSIWPSKFSAKFLVELIMRANKFEKLWEGIQPLKNLKRMELGDARNLKEIPDLSNATNLESLLLSFCTSLLEIPSSIRGTTNLKELDLGGCASLVKLSSCICNATSLEELNLSACSNLVELPCALPGDSNMRSLSKLLLNGSSRLKTFPEISTNIQELNLSGTAIEEVPSSIRLWSRLDKLDMSRCKNLKMFPPVPDGISVLNLSETEIEDIPPWVENLSQLRHFVMIRCKKLDNISLSRISKMEGVHCLQITRGDEDVSGDSIVNIRWYSNFPNQWTLQSDMLQICLPELVYTSPVSLHFISNEFKTIPDCIKNLSQLHQLSFYRCHKLVSLPQLSDCLSSLDAENCVSLETIDGSFHNPDIRLNFLNCNNLNQEARELIQKSVCKHALLPSGEVPAYFIHRAIGDSVTIHLKERHLPLYLIFKASLVLFNDDEINYDYDDDDDDDYDEEVIVYGDYDSYPHSDDYTKQETMRLSCRVEGKQNGLTIQYGSSVHLLPTPHRYTEHVYIFEASFSLGECNSPEAESELVFDFKVHDYFWAIKECGLRLLELPHAHGDD</sequence>
<gene>
    <name evidence="4" type="primary">DSC2</name>
    <name evidence="6" type="ordered locus">At5g18370</name>
</gene>
<protein>
    <recommendedName>
        <fullName evidence="5">Disease resistance-like protein DSC2</fullName>
        <ecNumber evidence="2">3.2.2.6</ecNumber>
    </recommendedName>
    <alternativeName>
        <fullName evidence="4">Protein DOMINANT SUPPRESSOR OF CAMTA3 NUMBER 2</fullName>
    </alternativeName>
</protein>
<name>DSC2_ARATH</name>
<comment type="function">
    <text evidence="3">TIR-NB-LRR receptor-like protein involved in plant defense. Acts as a trigger of hypersensitive response (HR). Functions as a guard of CAMTA3, a negative regulator of immunity, during pathogen infection.</text>
</comment>
<comment type="catalytic activity">
    <reaction evidence="2">
        <text>NAD(+) + H2O = ADP-D-ribose + nicotinamide + H(+)</text>
        <dbReference type="Rhea" id="RHEA:16301"/>
        <dbReference type="ChEBI" id="CHEBI:15377"/>
        <dbReference type="ChEBI" id="CHEBI:15378"/>
        <dbReference type="ChEBI" id="CHEBI:17154"/>
        <dbReference type="ChEBI" id="CHEBI:57540"/>
        <dbReference type="ChEBI" id="CHEBI:57967"/>
        <dbReference type="EC" id="3.2.2.6"/>
    </reaction>
    <physiologicalReaction direction="left-to-right" evidence="2">
        <dbReference type="Rhea" id="RHEA:16302"/>
    </physiologicalReaction>
</comment>
<comment type="subunit">
    <text evidence="3">Interacts with DSC1.</text>
</comment>
<comment type="domain">
    <text evidence="2">The TIR domain mediates NAD(+) hydrolase (NADase) activity. Self-association of TIR domains is required for NADase activity.</text>
</comment>
<comment type="similarity">
    <text evidence="5">Belongs to the disease resistance NB-LRR family.</text>
</comment>
<keyword id="KW-0067">ATP-binding</keyword>
<keyword id="KW-0378">Hydrolase</keyword>
<keyword id="KW-0381">Hypersensitive response</keyword>
<keyword id="KW-0433">Leucine-rich repeat</keyword>
<keyword id="KW-0520">NAD</keyword>
<keyword id="KW-0547">Nucleotide-binding</keyword>
<keyword id="KW-0611">Plant defense</keyword>
<keyword id="KW-1185">Reference proteome</keyword>
<keyword id="KW-0677">Repeat</keyword>
<accession>F4JWM0</accession>
<dbReference type="EC" id="3.2.2.6" evidence="2"/>
<dbReference type="EMBL" id="AC051626">
    <property type="status" value="NOT_ANNOTATED_CDS"/>
    <property type="molecule type" value="Genomic_DNA"/>
</dbReference>
<dbReference type="EMBL" id="CP002688">
    <property type="protein sequence ID" value="AED92545.1"/>
    <property type="molecule type" value="Genomic_DNA"/>
</dbReference>
<dbReference type="RefSeq" id="NP_001318593.1">
    <property type="nucleotide sequence ID" value="NM_001343545.1"/>
</dbReference>
<dbReference type="SMR" id="F4JWM0"/>
<dbReference type="FunCoup" id="F4JWM0">
    <property type="interactions" value="7"/>
</dbReference>
<dbReference type="STRING" id="3702.F4JWM0"/>
<dbReference type="PaxDb" id="3702-AT5G18370.1"/>
<dbReference type="EnsemblPlants" id="AT5G18370.1">
    <property type="protein sequence ID" value="AT5G18370.1"/>
    <property type="gene ID" value="AT5G18370"/>
</dbReference>
<dbReference type="GeneID" id="831955"/>
<dbReference type="Gramene" id="AT5G18370.1">
    <property type="protein sequence ID" value="AT5G18370.1"/>
    <property type="gene ID" value="AT5G18370"/>
</dbReference>
<dbReference type="KEGG" id="ath:AT5G18370"/>
<dbReference type="Araport" id="AT5G18370"/>
<dbReference type="TAIR" id="AT5G18370">
    <property type="gene designation" value="DSC2"/>
</dbReference>
<dbReference type="eggNOG" id="ENOG502SUNR">
    <property type="taxonomic scope" value="Eukaryota"/>
</dbReference>
<dbReference type="HOGENOM" id="CLU_001561_0_1_1"/>
<dbReference type="InParanoid" id="F4JWM0"/>
<dbReference type="OMA" id="FHGFRAD"/>
<dbReference type="PhylomeDB" id="F4JWM0"/>
<dbReference type="PRO" id="PR:F4JWM0"/>
<dbReference type="Proteomes" id="UP000006548">
    <property type="component" value="Chromosome 5"/>
</dbReference>
<dbReference type="ExpressionAtlas" id="F4JWM0">
    <property type="expression patterns" value="baseline and differential"/>
</dbReference>
<dbReference type="GO" id="GO:0043531">
    <property type="term" value="F:ADP binding"/>
    <property type="evidence" value="ECO:0007669"/>
    <property type="project" value="InterPro"/>
</dbReference>
<dbReference type="GO" id="GO:0005524">
    <property type="term" value="F:ATP binding"/>
    <property type="evidence" value="ECO:0007669"/>
    <property type="project" value="UniProtKB-KW"/>
</dbReference>
<dbReference type="GO" id="GO:0016887">
    <property type="term" value="F:ATP hydrolysis activity"/>
    <property type="evidence" value="ECO:0007669"/>
    <property type="project" value="InterPro"/>
</dbReference>
<dbReference type="GO" id="GO:0061809">
    <property type="term" value="F:NAD+ nucleosidase activity, cyclic ADP-ribose generating"/>
    <property type="evidence" value="ECO:0007669"/>
    <property type="project" value="UniProtKB-EC"/>
</dbReference>
<dbReference type="GO" id="GO:0042742">
    <property type="term" value="P:defense response to bacterium"/>
    <property type="evidence" value="ECO:0000315"/>
    <property type="project" value="UniProtKB"/>
</dbReference>
<dbReference type="GO" id="GO:0009626">
    <property type="term" value="P:plant-type hypersensitive response"/>
    <property type="evidence" value="ECO:0007669"/>
    <property type="project" value="UniProtKB-KW"/>
</dbReference>
<dbReference type="GO" id="GO:0007165">
    <property type="term" value="P:signal transduction"/>
    <property type="evidence" value="ECO:0007669"/>
    <property type="project" value="InterPro"/>
</dbReference>
<dbReference type="FunFam" id="1.10.8.430:FF:000002">
    <property type="entry name" value="Disease resistance protein (TIR-NBS-LRR class)"/>
    <property type="match status" value="1"/>
</dbReference>
<dbReference type="FunFam" id="3.40.50.10140:FF:000007">
    <property type="entry name" value="Disease resistance protein (TIR-NBS-LRR class)"/>
    <property type="match status" value="1"/>
</dbReference>
<dbReference type="FunFam" id="3.40.50.300:FF:001002">
    <property type="entry name" value="Disease resistance protein (TIR-NBS-LRR class)"/>
    <property type="match status" value="1"/>
</dbReference>
<dbReference type="Gene3D" id="1.10.8.430">
    <property type="entry name" value="Helical domain of apoptotic protease-activating factors"/>
    <property type="match status" value="1"/>
</dbReference>
<dbReference type="Gene3D" id="3.40.50.300">
    <property type="entry name" value="P-loop containing nucleotide triphosphate hydrolases"/>
    <property type="match status" value="1"/>
</dbReference>
<dbReference type="Gene3D" id="3.80.10.10">
    <property type="entry name" value="Ribonuclease Inhibitor"/>
    <property type="match status" value="2"/>
</dbReference>
<dbReference type="Gene3D" id="3.40.50.10140">
    <property type="entry name" value="Toll/interleukin-1 receptor homology (TIR) domain"/>
    <property type="match status" value="1"/>
</dbReference>
<dbReference type="InterPro" id="IPR003593">
    <property type="entry name" value="AAA+_ATPase"/>
</dbReference>
<dbReference type="InterPro" id="IPR042197">
    <property type="entry name" value="Apaf_helical"/>
</dbReference>
<dbReference type="InterPro" id="IPR044974">
    <property type="entry name" value="Disease_R_plants"/>
</dbReference>
<dbReference type="InterPro" id="IPR011713">
    <property type="entry name" value="Leu-rich_rpt_3"/>
</dbReference>
<dbReference type="InterPro" id="IPR032675">
    <property type="entry name" value="LRR_dom_sf"/>
</dbReference>
<dbReference type="InterPro" id="IPR002182">
    <property type="entry name" value="NB-ARC"/>
</dbReference>
<dbReference type="InterPro" id="IPR027417">
    <property type="entry name" value="P-loop_NTPase"/>
</dbReference>
<dbReference type="InterPro" id="IPR000157">
    <property type="entry name" value="TIR_dom"/>
</dbReference>
<dbReference type="InterPro" id="IPR035897">
    <property type="entry name" value="Toll_tir_struct_dom_sf"/>
</dbReference>
<dbReference type="InterPro" id="IPR036390">
    <property type="entry name" value="WH_DNA-bd_sf"/>
</dbReference>
<dbReference type="PANTHER" id="PTHR11017:SF411">
    <property type="entry name" value="ADP-RIBOSYL CYCLASE_CYCLIC ADP-RIBOSE HYDROLASE-RELATED"/>
    <property type="match status" value="1"/>
</dbReference>
<dbReference type="PANTHER" id="PTHR11017">
    <property type="entry name" value="LEUCINE-RICH REPEAT-CONTAINING PROTEIN"/>
    <property type="match status" value="1"/>
</dbReference>
<dbReference type="Pfam" id="PF07725">
    <property type="entry name" value="LRR_3"/>
    <property type="match status" value="1"/>
</dbReference>
<dbReference type="Pfam" id="PF00931">
    <property type="entry name" value="NB-ARC"/>
    <property type="match status" value="1"/>
</dbReference>
<dbReference type="Pfam" id="PF01582">
    <property type="entry name" value="TIR"/>
    <property type="match status" value="1"/>
</dbReference>
<dbReference type="Pfam" id="PF23282">
    <property type="entry name" value="WHD_ROQ1"/>
    <property type="match status" value="1"/>
</dbReference>
<dbReference type="PRINTS" id="PR00364">
    <property type="entry name" value="DISEASERSIST"/>
</dbReference>
<dbReference type="SMART" id="SM00382">
    <property type="entry name" value="AAA"/>
    <property type="match status" value="1"/>
</dbReference>
<dbReference type="SMART" id="SM00255">
    <property type="entry name" value="TIR"/>
    <property type="match status" value="1"/>
</dbReference>
<dbReference type="SUPFAM" id="SSF52058">
    <property type="entry name" value="L domain-like"/>
    <property type="match status" value="1"/>
</dbReference>
<dbReference type="SUPFAM" id="SSF52540">
    <property type="entry name" value="P-loop containing nucleoside triphosphate hydrolases"/>
    <property type="match status" value="1"/>
</dbReference>
<dbReference type="SUPFAM" id="SSF52200">
    <property type="entry name" value="Toll/Interleukin receptor TIR domain"/>
    <property type="match status" value="1"/>
</dbReference>
<dbReference type="SUPFAM" id="SSF46785">
    <property type="entry name" value="Winged helix' DNA-binding domain"/>
    <property type="match status" value="1"/>
</dbReference>
<dbReference type="PROSITE" id="PS50104">
    <property type="entry name" value="TIR"/>
    <property type="match status" value="1"/>
</dbReference>
<reference key="1">
    <citation type="journal article" date="2000" name="Nature">
        <title>Sequence and analysis of chromosome 5 of the plant Arabidopsis thaliana.</title>
        <authorList>
            <person name="Tabata S."/>
            <person name="Kaneko T."/>
            <person name="Nakamura Y."/>
            <person name="Kotani H."/>
            <person name="Kato T."/>
            <person name="Asamizu E."/>
            <person name="Miyajima N."/>
            <person name="Sasamoto S."/>
            <person name="Kimura T."/>
            <person name="Hosouchi T."/>
            <person name="Kawashima K."/>
            <person name="Kohara M."/>
            <person name="Matsumoto M."/>
            <person name="Matsuno A."/>
            <person name="Muraki A."/>
            <person name="Nakayama S."/>
            <person name="Nakazaki N."/>
            <person name="Naruo K."/>
            <person name="Okumura S."/>
            <person name="Shinpo S."/>
            <person name="Takeuchi C."/>
            <person name="Wada T."/>
            <person name="Watanabe A."/>
            <person name="Yamada M."/>
            <person name="Yasuda M."/>
            <person name="Sato S."/>
            <person name="de la Bastide M."/>
            <person name="Huang E."/>
            <person name="Spiegel L."/>
            <person name="Gnoj L."/>
            <person name="O'Shaughnessy A."/>
            <person name="Preston R."/>
            <person name="Habermann K."/>
            <person name="Murray J."/>
            <person name="Johnson D."/>
            <person name="Rohlfing T."/>
            <person name="Nelson J."/>
            <person name="Stoneking T."/>
            <person name="Pepin K."/>
            <person name="Spieth J."/>
            <person name="Sekhon M."/>
            <person name="Armstrong J."/>
            <person name="Becker M."/>
            <person name="Belter E."/>
            <person name="Cordum H."/>
            <person name="Cordes M."/>
            <person name="Courtney L."/>
            <person name="Courtney W."/>
            <person name="Dante M."/>
            <person name="Du H."/>
            <person name="Edwards J."/>
            <person name="Fryman J."/>
            <person name="Haakensen B."/>
            <person name="Lamar E."/>
            <person name="Latreille P."/>
            <person name="Leonard S."/>
            <person name="Meyer R."/>
            <person name="Mulvaney E."/>
            <person name="Ozersky P."/>
            <person name="Riley A."/>
            <person name="Strowmatt C."/>
            <person name="Wagner-McPherson C."/>
            <person name="Wollam A."/>
            <person name="Yoakum M."/>
            <person name="Bell M."/>
            <person name="Dedhia N."/>
            <person name="Parnell L."/>
            <person name="Shah R."/>
            <person name="Rodriguez M."/>
            <person name="Hoon See L."/>
            <person name="Vil D."/>
            <person name="Baker J."/>
            <person name="Kirchoff K."/>
            <person name="Toth K."/>
            <person name="King L."/>
            <person name="Bahret A."/>
            <person name="Miller B."/>
            <person name="Marra M.A."/>
            <person name="Martienssen R."/>
            <person name="McCombie W.R."/>
            <person name="Wilson R.K."/>
            <person name="Murphy G."/>
            <person name="Bancroft I."/>
            <person name="Volckaert G."/>
            <person name="Wambutt R."/>
            <person name="Duesterhoeft A."/>
            <person name="Stiekema W."/>
            <person name="Pohl T."/>
            <person name="Entian K.-D."/>
            <person name="Terryn N."/>
            <person name="Hartley N."/>
            <person name="Bent E."/>
            <person name="Johnson S."/>
            <person name="Langham S.-A."/>
            <person name="McCullagh B."/>
            <person name="Robben J."/>
            <person name="Grymonprez B."/>
            <person name="Zimmermann W."/>
            <person name="Ramsperger U."/>
            <person name="Wedler H."/>
            <person name="Balke K."/>
            <person name="Wedler E."/>
            <person name="Peters S."/>
            <person name="van Staveren M."/>
            <person name="Dirkse W."/>
            <person name="Mooijman P."/>
            <person name="Klein Lankhorst R."/>
            <person name="Weitzenegger T."/>
            <person name="Bothe G."/>
            <person name="Rose M."/>
            <person name="Hauf J."/>
            <person name="Berneiser S."/>
            <person name="Hempel S."/>
            <person name="Feldpausch M."/>
            <person name="Lamberth S."/>
            <person name="Villarroel R."/>
            <person name="Gielen J."/>
            <person name="Ardiles W."/>
            <person name="Bents O."/>
            <person name="Lemcke K."/>
            <person name="Kolesov G."/>
            <person name="Mayer K.F.X."/>
            <person name="Rudd S."/>
            <person name="Schoof H."/>
            <person name="Schueller C."/>
            <person name="Zaccaria P."/>
            <person name="Mewes H.-W."/>
            <person name="Bevan M."/>
            <person name="Fransz P.F."/>
        </authorList>
    </citation>
    <scope>NUCLEOTIDE SEQUENCE [LARGE SCALE GENOMIC DNA]</scope>
    <source>
        <strain>cv. Columbia</strain>
    </source>
</reference>
<reference key="2">
    <citation type="journal article" date="2017" name="Plant J.">
        <title>Araport11: a complete reannotation of the Arabidopsis thaliana reference genome.</title>
        <authorList>
            <person name="Cheng C.Y."/>
            <person name="Krishnakumar V."/>
            <person name="Chan A.P."/>
            <person name="Thibaud-Nissen F."/>
            <person name="Schobel S."/>
            <person name="Town C.D."/>
        </authorList>
    </citation>
    <scope>GENOME REANNOTATION</scope>
    <source>
        <strain>cv. Columbia</strain>
    </source>
</reference>
<reference key="3">
    <citation type="journal article" date="2017" name="Cell Host Microbe">
        <title>Matching NLR immune receptors to autoimmunity in camta3 mutants using antimorphic NLR alleles.</title>
        <authorList>
            <person name="Lolle S."/>
            <person name="Greeff C."/>
            <person name="Petersen K."/>
            <person name="Roux M."/>
            <person name="Jensen M.K."/>
            <person name="Bressendorff S."/>
            <person name="Rodriguez E."/>
            <person name="Soemark K."/>
            <person name="Mundy J."/>
            <person name="Petersen M."/>
        </authorList>
    </citation>
    <scope>FUNCTION</scope>
    <scope>INTERACTION WITH DSC1</scope>
    <scope>MUTAGENESIS OF 267-GLY-LYS-268</scope>
</reference>
<evidence type="ECO:0000255" key="1"/>
<evidence type="ECO:0000255" key="2">
    <source>
        <dbReference type="PROSITE-ProRule" id="PRU00204"/>
    </source>
</evidence>
<evidence type="ECO:0000269" key="3">
    <source>
    </source>
</evidence>
<evidence type="ECO:0000303" key="4">
    <source>
    </source>
</evidence>
<evidence type="ECO:0000305" key="5"/>
<evidence type="ECO:0000312" key="6">
    <source>
        <dbReference type="Araport" id="AT5G18370"/>
    </source>
</evidence>